<keyword id="KW-0238">DNA-binding</keyword>
<keyword id="KW-0614">Plasmid</keyword>
<keyword id="KW-0804">Transcription</keyword>
<keyword id="KW-0805">Transcription regulation</keyword>
<feature type="chain" id="PRO_0000272027" description="Uncharacterized HTH-type transcriptional regulator YuaB">
    <location>
        <begin position="1"/>
        <end position="353"/>
    </location>
</feature>
<feature type="domain" description="HTH luxR-type">
    <location>
        <begin position="18"/>
        <end position="83"/>
    </location>
</feature>
<feature type="domain" description="EAL" evidence="2">
    <location>
        <begin position="98"/>
        <end position="350"/>
    </location>
</feature>
<feature type="DNA-binding region" description="H-T-H motif" evidence="1">
    <location>
        <begin position="42"/>
        <end position="61"/>
    </location>
</feature>
<gene>
    <name type="primary">yuaB</name>
    <name type="synonym">ybaA</name>
    <name type="ordered locus">ECOK12F011</name>
</gene>
<dbReference type="EMBL" id="AP001918">
    <property type="protein sequence ID" value="BAA97881.1"/>
    <property type="molecule type" value="Genomic_DNA"/>
</dbReference>
<dbReference type="RefSeq" id="NP_061390.1">
    <property type="nucleotide sequence ID" value="NC_002483.1"/>
</dbReference>
<dbReference type="RefSeq" id="WP_001092154.1">
    <property type="nucleotide sequence ID" value="NC_002483.1"/>
</dbReference>
<dbReference type="SMR" id="Q9JMT8"/>
<dbReference type="KEGG" id="ecoc:C3026_24155"/>
<dbReference type="PATRIC" id="fig|83333.107.peg.592"/>
<dbReference type="OrthoDB" id="675397at2"/>
<dbReference type="PhylomeDB" id="Q9JMT8"/>
<dbReference type="GO" id="GO:0071111">
    <property type="term" value="F:cyclic-guanylate-specific phosphodiesterase activity"/>
    <property type="evidence" value="ECO:0007669"/>
    <property type="project" value="InterPro"/>
</dbReference>
<dbReference type="GO" id="GO:0003677">
    <property type="term" value="F:DNA binding"/>
    <property type="evidence" value="ECO:0007669"/>
    <property type="project" value="UniProtKB-KW"/>
</dbReference>
<dbReference type="GO" id="GO:0006355">
    <property type="term" value="P:regulation of DNA-templated transcription"/>
    <property type="evidence" value="ECO:0007669"/>
    <property type="project" value="InterPro"/>
</dbReference>
<dbReference type="CDD" id="cd01948">
    <property type="entry name" value="EAL"/>
    <property type="match status" value="1"/>
</dbReference>
<dbReference type="CDD" id="cd06170">
    <property type="entry name" value="LuxR_C_like"/>
    <property type="match status" value="1"/>
</dbReference>
<dbReference type="Gene3D" id="3.20.20.450">
    <property type="entry name" value="EAL domain"/>
    <property type="match status" value="1"/>
</dbReference>
<dbReference type="Gene3D" id="1.10.10.10">
    <property type="entry name" value="Winged helix-like DNA-binding domain superfamily/Winged helix DNA-binding domain"/>
    <property type="match status" value="1"/>
</dbReference>
<dbReference type="InterPro" id="IPR050706">
    <property type="entry name" value="Cyclic-di-GMP_PDE-like"/>
</dbReference>
<dbReference type="InterPro" id="IPR001633">
    <property type="entry name" value="EAL_dom"/>
</dbReference>
<dbReference type="InterPro" id="IPR035919">
    <property type="entry name" value="EAL_sf"/>
</dbReference>
<dbReference type="InterPro" id="IPR016032">
    <property type="entry name" value="Sig_transdc_resp-reg_C-effctor"/>
</dbReference>
<dbReference type="InterPro" id="IPR000792">
    <property type="entry name" value="Tscrpt_reg_LuxR_C"/>
</dbReference>
<dbReference type="InterPro" id="IPR036388">
    <property type="entry name" value="WH-like_DNA-bd_sf"/>
</dbReference>
<dbReference type="PANTHER" id="PTHR33121">
    <property type="entry name" value="CYCLIC DI-GMP PHOSPHODIESTERASE PDEF"/>
    <property type="match status" value="1"/>
</dbReference>
<dbReference type="PANTHER" id="PTHR33121:SF80">
    <property type="entry name" value="CYCLIC DI-GMP PHOSPHODIESTERASE PDEL"/>
    <property type="match status" value="1"/>
</dbReference>
<dbReference type="Pfam" id="PF00563">
    <property type="entry name" value="EAL"/>
    <property type="match status" value="1"/>
</dbReference>
<dbReference type="Pfam" id="PF00196">
    <property type="entry name" value="GerE"/>
    <property type="match status" value="1"/>
</dbReference>
<dbReference type="SMART" id="SM00052">
    <property type="entry name" value="EAL"/>
    <property type="match status" value="1"/>
</dbReference>
<dbReference type="SMART" id="SM00421">
    <property type="entry name" value="HTH_LUXR"/>
    <property type="match status" value="1"/>
</dbReference>
<dbReference type="SUPFAM" id="SSF46894">
    <property type="entry name" value="C-terminal effector domain of the bipartite response regulators"/>
    <property type="match status" value="1"/>
</dbReference>
<dbReference type="SUPFAM" id="SSF141868">
    <property type="entry name" value="EAL domain-like"/>
    <property type="match status" value="1"/>
</dbReference>
<dbReference type="PROSITE" id="PS50883">
    <property type="entry name" value="EAL"/>
    <property type="match status" value="1"/>
</dbReference>
<name>YUAB_ECOLI</name>
<geneLocation type="plasmid">
    <name>F</name>
</geneLocation>
<organism>
    <name type="scientific">Escherichia coli (strain K12)</name>
    <dbReference type="NCBI Taxonomy" id="83333"/>
    <lineage>
        <taxon>Bacteria</taxon>
        <taxon>Pseudomonadati</taxon>
        <taxon>Pseudomonadota</taxon>
        <taxon>Gammaproteobacteria</taxon>
        <taxon>Enterobacterales</taxon>
        <taxon>Enterobacteriaceae</taxon>
        <taxon>Escherichia</taxon>
    </lineage>
</organism>
<evidence type="ECO:0000250" key="1"/>
<evidence type="ECO:0000255" key="2">
    <source>
        <dbReference type="PROSITE-ProRule" id="PRU00074"/>
    </source>
</evidence>
<proteinExistence type="predicted"/>
<reference key="1">
    <citation type="submission" date="2000-04" db="EMBL/GenBank/DDBJ databases">
        <title>Complete nucleotide sequence of the F plasmid: its implications for organization and diversification of plasmid genomes.</title>
        <authorList>
            <person name="Shimizu H."/>
            <person name="Saitoh Y."/>
            <person name="Suda Y."/>
            <person name="Uehara K."/>
            <person name="Sampei G."/>
            <person name="Mizobuchi K."/>
        </authorList>
    </citation>
    <scope>NUCLEOTIDE SEQUENCE [LARGE SCALE GENOMIC DNA]</scope>
    <source>
        <strain>K12 / CR63</strain>
    </source>
</reference>
<sequence length="353" mass="40465">MNTIKIKLNLIDYDSIVNIEFPCLLSEIEIELLSQLLKGYSVNEISKRRNRSIKTVSCQKMKLYKKLNVKSDLTLWRDVFLRFKAYLQPKNIICDNFNSSVLPVVSSKGESMAHYNIYYQPIYNAKNGNIAGCDVTIALKNSDGSAFALDSDRINYNPNDNKVSYLFGHINKLFSPIKNNLPHGFFITININPEDILTCDIERECLHFIKVFGTERIRLVLQFSTKEELYIIRRYQSSLRRIRNNNVYLSLNDFGMGYAELSHLQNIPFSYVNLHKTMFHDIESNSLTDIIATTIIDLSKQLHIDVIADGIETKKQAGYMIERGVKYLKGIALSSPLPADAFVRKLLASLKQV</sequence>
<protein>
    <recommendedName>
        <fullName>Uncharacterized HTH-type transcriptional regulator YuaB</fullName>
    </recommendedName>
</protein>
<accession>Q9JMT8</accession>